<organism>
    <name type="scientific">Ruthia magnifica subsp. Calyptogena magnifica</name>
    <dbReference type="NCBI Taxonomy" id="413404"/>
    <lineage>
        <taxon>Bacteria</taxon>
        <taxon>Pseudomonadati</taxon>
        <taxon>Pseudomonadota</taxon>
        <taxon>Gammaproteobacteria</taxon>
        <taxon>Candidatus Pseudothioglobaceae</taxon>
        <taxon>Candidatus Ruthturnera</taxon>
    </lineage>
</organism>
<accession>A1AV71</accession>
<keyword id="KW-0414">Isoprene biosynthesis</keyword>
<keyword id="KW-0464">Manganese</keyword>
<keyword id="KW-0479">Metal-binding</keyword>
<keyword id="KW-0521">NADP</keyword>
<keyword id="KW-0560">Oxidoreductase</keyword>
<gene>
    <name evidence="1" type="primary">dxr</name>
    <name type="ordered locus">Rmag_0025</name>
</gene>
<dbReference type="EC" id="1.1.1.267" evidence="1"/>
<dbReference type="EMBL" id="CP000488">
    <property type="protein sequence ID" value="ABL01828.1"/>
    <property type="molecule type" value="Genomic_DNA"/>
</dbReference>
<dbReference type="SMR" id="A1AV71"/>
<dbReference type="STRING" id="413404.Rmag_0025"/>
<dbReference type="KEGG" id="rma:Rmag_0025"/>
<dbReference type="eggNOG" id="COG0743">
    <property type="taxonomic scope" value="Bacteria"/>
</dbReference>
<dbReference type="HOGENOM" id="CLU_035714_4_0_6"/>
<dbReference type="OrthoDB" id="9806546at2"/>
<dbReference type="UniPathway" id="UPA00056">
    <property type="reaction ID" value="UER00092"/>
</dbReference>
<dbReference type="Proteomes" id="UP000002587">
    <property type="component" value="Chromosome"/>
</dbReference>
<dbReference type="GO" id="GO:0030604">
    <property type="term" value="F:1-deoxy-D-xylulose-5-phosphate reductoisomerase activity"/>
    <property type="evidence" value="ECO:0007669"/>
    <property type="project" value="UniProtKB-UniRule"/>
</dbReference>
<dbReference type="GO" id="GO:0030145">
    <property type="term" value="F:manganese ion binding"/>
    <property type="evidence" value="ECO:0007669"/>
    <property type="project" value="TreeGrafter"/>
</dbReference>
<dbReference type="GO" id="GO:0070402">
    <property type="term" value="F:NADPH binding"/>
    <property type="evidence" value="ECO:0007669"/>
    <property type="project" value="InterPro"/>
</dbReference>
<dbReference type="GO" id="GO:0051484">
    <property type="term" value="P:isopentenyl diphosphate biosynthetic process, methylerythritol 4-phosphate pathway involved in terpenoid biosynthetic process"/>
    <property type="evidence" value="ECO:0007669"/>
    <property type="project" value="TreeGrafter"/>
</dbReference>
<dbReference type="FunFam" id="3.40.50.720:FF:000045">
    <property type="entry name" value="1-deoxy-D-xylulose 5-phosphate reductoisomerase"/>
    <property type="match status" value="1"/>
</dbReference>
<dbReference type="Gene3D" id="1.10.1740.10">
    <property type="match status" value="1"/>
</dbReference>
<dbReference type="Gene3D" id="3.40.50.720">
    <property type="entry name" value="NAD(P)-binding Rossmann-like Domain"/>
    <property type="match status" value="1"/>
</dbReference>
<dbReference type="HAMAP" id="MF_00183">
    <property type="entry name" value="DXP_reductoisom"/>
    <property type="match status" value="1"/>
</dbReference>
<dbReference type="InterPro" id="IPR003821">
    <property type="entry name" value="DXP_reductoisomerase"/>
</dbReference>
<dbReference type="InterPro" id="IPR013644">
    <property type="entry name" value="DXP_reductoisomerase_C"/>
</dbReference>
<dbReference type="InterPro" id="IPR013512">
    <property type="entry name" value="DXP_reductoisomerase_N"/>
</dbReference>
<dbReference type="InterPro" id="IPR026877">
    <property type="entry name" value="DXPR_C"/>
</dbReference>
<dbReference type="InterPro" id="IPR036169">
    <property type="entry name" value="DXPR_C_sf"/>
</dbReference>
<dbReference type="InterPro" id="IPR036291">
    <property type="entry name" value="NAD(P)-bd_dom_sf"/>
</dbReference>
<dbReference type="NCBIfam" id="TIGR00243">
    <property type="entry name" value="Dxr"/>
    <property type="match status" value="1"/>
</dbReference>
<dbReference type="NCBIfam" id="NF003938">
    <property type="entry name" value="PRK05447.1-1"/>
    <property type="match status" value="1"/>
</dbReference>
<dbReference type="NCBIfam" id="NF009114">
    <property type="entry name" value="PRK12464.1"/>
    <property type="match status" value="1"/>
</dbReference>
<dbReference type="PANTHER" id="PTHR30525">
    <property type="entry name" value="1-DEOXY-D-XYLULOSE 5-PHOSPHATE REDUCTOISOMERASE"/>
    <property type="match status" value="1"/>
</dbReference>
<dbReference type="PANTHER" id="PTHR30525:SF0">
    <property type="entry name" value="1-DEOXY-D-XYLULOSE 5-PHOSPHATE REDUCTOISOMERASE, CHLOROPLASTIC"/>
    <property type="match status" value="1"/>
</dbReference>
<dbReference type="Pfam" id="PF08436">
    <property type="entry name" value="DXP_redisom_C"/>
    <property type="match status" value="1"/>
</dbReference>
<dbReference type="Pfam" id="PF02670">
    <property type="entry name" value="DXP_reductoisom"/>
    <property type="match status" value="1"/>
</dbReference>
<dbReference type="Pfam" id="PF13288">
    <property type="entry name" value="DXPR_C"/>
    <property type="match status" value="1"/>
</dbReference>
<dbReference type="PIRSF" id="PIRSF006205">
    <property type="entry name" value="Dxp_reductismrs"/>
    <property type="match status" value="1"/>
</dbReference>
<dbReference type="SUPFAM" id="SSF69055">
    <property type="entry name" value="1-deoxy-D-xylulose-5-phosphate reductoisomerase, C-terminal domain"/>
    <property type="match status" value="1"/>
</dbReference>
<dbReference type="SUPFAM" id="SSF55347">
    <property type="entry name" value="Glyceraldehyde-3-phosphate dehydrogenase-like, C-terminal domain"/>
    <property type="match status" value="1"/>
</dbReference>
<dbReference type="SUPFAM" id="SSF51735">
    <property type="entry name" value="NAD(P)-binding Rossmann-fold domains"/>
    <property type="match status" value="1"/>
</dbReference>
<evidence type="ECO:0000255" key="1">
    <source>
        <dbReference type="HAMAP-Rule" id="MF_00183"/>
    </source>
</evidence>
<name>DXR_RUTMC</name>
<feature type="chain" id="PRO_1000020304" description="1-deoxy-D-xylulose 5-phosphate reductoisomerase">
    <location>
        <begin position="1"/>
        <end position="383"/>
    </location>
</feature>
<feature type="binding site" evidence="1">
    <location>
        <position position="10"/>
    </location>
    <ligand>
        <name>NADPH</name>
        <dbReference type="ChEBI" id="CHEBI:57783"/>
    </ligand>
</feature>
<feature type="binding site" evidence="1">
    <location>
        <position position="11"/>
    </location>
    <ligand>
        <name>NADPH</name>
        <dbReference type="ChEBI" id="CHEBI:57783"/>
    </ligand>
</feature>
<feature type="binding site" evidence="1">
    <location>
        <position position="12"/>
    </location>
    <ligand>
        <name>NADPH</name>
        <dbReference type="ChEBI" id="CHEBI:57783"/>
    </ligand>
</feature>
<feature type="binding site" evidence="1">
    <location>
        <position position="13"/>
    </location>
    <ligand>
        <name>NADPH</name>
        <dbReference type="ChEBI" id="CHEBI:57783"/>
    </ligand>
</feature>
<feature type="binding site" evidence="1">
    <location>
        <position position="38"/>
    </location>
    <ligand>
        <name>NADPH</name>
        <dbReference type="ChEBI" id="CHEBI:57783"/>
    </ligand>
</feature>
<feature type="binding site" evidence="1">
    <location>
        <position position="121"/>
    </location>
    <ligand>
        <name>NADPH</name>
        <dbReference type="ChEBI" id="CHEBI:57783"/>
    </ligand>
</feature>
<feature type="binding site" evidence="1">
    <location>
        <position position="122"/>
    </location>
    <ligand>
        <name>1-deoxy-D-xylulose 5-phosphate</name>
        <dbReference type="ChEBI" id="CHEBI:57792"/>
    </ligand>
</feature>
<feature type="binding site" evidence="1">
    <location>
        <position position="123"/>
    </location>
    <ligand>
        <name>NADPH</name>
        <dbReference type="ChEBI" id="CHEBI:57783"/>
    </ligand>
</feature>
<feature type="binding site" evidence="1">
    <location>
        <position position="147"/>
    </location>
    <ligand>
        <name>Mn(2+)</name>
        <dbReference type="ChEBI" id="CHEBI:29035"/>
    </ligand>
</feature>
<feature type="binding site" evidence="1">
    <location>
        <position position="148"/>
    </location>
    <ligand>
        <name>1-deoxy-D-xylulose 5-phosphate</name>
        <dbReference type="ChEBI" id="CHEBI:57792"/>
    </ligand>
</feature>
<feature type="binding site" evidence="1">
    <location>
        <position position="149"/>
    </location>
    <ligand>
        <name>1-deoxy-D-xylulose 5-phosphate</name>
        <dbReference type="ChEBI" id="CHEBI:57792"/>
    </ligand>
</feature>
<feature type="binding site" evidence="1">
    <location>
        <position position="149"/>
    </location>
    <ligand>
        <name>Mn(2+)</name>
        <dbReference type="ChEBI" id="CHEBI:29035"/>
    </ligand>
</feature>
<feature type="binding site" evidence="1">
    <location>
        <position position="172"/>
    </location>
    <ligand>
        <name>1-deoxy-D-xylulose 5-phosphate</name>
        <dbReference type="ChEBI" id="CHEBI:57792"/>
    </ligand>
</feature>
<feature type="binding site" evidence="1">
    <location>
        <position position="195"/>
    </location>
    <ligand>
        <name>1-deoxy-D-xylulose 5-phosphate</name>
        <dbReference type="ChEBI" id="CHEBI:57792"/>
    </ligand>
</feature>
<feature type="binding site" evidence="1">
    <location>
        <position position="201"/>
    </location>
    <ligand>
        <name>NADPH</name>
        <dbReference type="ChEBI" id="CHEBI:57783"/>
    </ligand>
</feature>
<feature type="binding site" evidence="1">
    <location>
        <position position="208"/>
    </location>
    <ligand>
        <name>1-deoxy-D-xylulose 5-phosphate</name>
        <dbReference type="ChEBI" id="CHEBI:57792"/>
    </ligand>
</feature>
<feature type="binding site" evidence="1">
    <location>
        <position position="213"/>
    </location>
    <ligand>
        <name>1-deoxy-D-xylulose 5-phosphate</name>
        <dbReference type="ChEBI" id="CHEBI:57792"/>
    </ligand>
</feature>
<feature type="binding site" evidence="1">
    <location>
        <position position="214"/>
    </location>
    <ligand>
        <name>1-deoxy-D-xylulose 5-phosphate</name>
        <dbReference type="ChEBI" id="CHEBI:57792"/>
    </ligand>
</feature>
<feature type="binding site" evidence="1">
    <location>
        <position position="217"/>
    </location>
    <ligand>
        <name>1-deoxy-D-xylulose 5-phosphate</name>
        <dbReference type="ChEBI" id="CHEBI:57792"/>
    </ligand>
</feature>
<feature type="binding site" evidence="1">
    <location>
        <position position="217"/>
    </location>
    <ligand>
        <name>Mn(2+)</name>
        <dbReference type="ChEBI" id="CHEBI:29035"/>
    </ligand>
</feature>
<reference key="1">
    <citation type="journal article" date="2007" name="Science">
        <title>The Calyptogena magnifica chemoautotrophic symbiont genome.</title>
        <authorList>
            <person name="Newton I.L.G."/>
            <person name="Woyke T."/>
            <person name="Auchtung T.A."/>
            <person name="Dilly G.F."/>
            <person name="Dutton R.J."/>
            <person name="Fisher M.C."/>
            <person name="Fontanez K.M."/>
            <person name="Lau E."/>
            <person name="Stewart F.J."/>
            <person name="Richardson P.M."/>
            <person name="Barry K.W."/>
            <person name="Saunders E."/>
            <person name="Detter J.C."/>
            <person name="Wu D."/>
            <person name="Eisen J.A."/>
            <person name="Cavanaugh C.M."/>
        </authorList>
    </citation>
    <scope>NUCLEOTIDE SEQUENCE [LARGE SCALE GENOMIC DNA]</scope>
</reference>
<protein>
    <recommendedName>
        <fullName evidence="1">1-deoxy-D-xylulose 5-phosphate reductoisomerase</fullName>
        <shortName evidence="1">DXP reductoisomerase</shortName>
        <ecNumber evidence="1">1.1.1.267</ecNumber>
    </recommendedName>
    <alternativeName>
        <fullName evidence="1">1-deoxyxylulose-5-phosphate reductoisomerase</fullName>
    </alternativeName>
    <alternativeName>
        <fullName evidence="1">2-C-methyl-D-erythritol 4-phosphate synthase</fullName>
    </alternativeName>
</protein>
<sequence>MKNITLLGATGSIGKSTLSVVDLHSDKFNIFTLSANTNWQLMLELCNKYQPNYAIMVDESSAEKLSTIITTDTQILSGTQALDKVVAHQDTDFVMAAIVGTAGMSSALCAVKAGKRIMLANKESLILAGDIFMKAVEEFNAELIPVDSEHSAIFQCLQSGRSGLNKIQLTASGGPFLHTPISKFKYITPNQACAHPNWSMGRKISVDSATMMNKGLEVIEAYYLFSLTPEQIDVVVHPQSIVHSSVYYKDGSTLSQLGKPDMRTVISYAMSYPQRINSGVTALDLTNTPALEFYQPDFEKFTCLKLAFETLNKGGNAMITMNAANEIAVEYFLNHQINFLDIPKIIDQTLSAMKHTTPNSLEEVVNNDLVAREMTREIIKQYG</sequence>
<proteinExistence type="inferred from homology"/>
<comment type="function">
    <text evidence="1">Catalyzes the NADPH-dependent rearrangement and reduction of 1-deoxy-D-xylulose-5-phosphate (DXP) to 2-C-methyl-D-erythritol 4-phosphate (MEP).</text>
</comment>
<comment type="catalytic activity">
    <reaction evidence="1">
        <text>2-C-methyl-D-erythritol 4-phosphate + NADP(+) = 1-deoxy-D-xylulose 5-phosphate + NADPH + H(+)</text>
        <dbReference type="Rhea" id="RHEA:13717"/>
        <dbReference type="ChEBI" id="CHEBI:15378"/>
        <dbReference type="ChEBI" id="CHEBI:57783"/>
        <dbReference type="ChEBI" id="CHEBI:57792"/>
        <dbReference type="ChEBI" id="CHEBI:58262"/>
        <dbReference type="ChEBI" id="CHEBI:58349"/>
        <dbReference type="EC" id="1.1.1.267"/>
    </reaction>
    <physiologicalReaction direction="right-to-left" evidence="1">
        <dbReference type="Rhea" id="RHEA:13719"/>
    </physiologicalReaction>
</comment>
<comment type="cofactor">
    <cofactor evidence="1">
        <name>Mg(2+)</name>
        <dbReference type="ChEBI" id="CHEBI:18420"/>
    </cofactor>
    <cofactor evidence="1">
        <name>Mn(2+)</name>
        <dbReference type="ChEBI" id="CHEBI:29035"/>
    </cofactor>
</comment>
<comment type="pathway">
    <text evidence="1">Isoprenoid biosynthesis; isopentenyl diphosphate biosynthesis via DXP pathway; isopentenyl diphosphate from 1-deoxy-D-xylulose 5-phosphate: step 1/6.</text>
</comment>
<comment type="similarity">
    <text evidence="1">Belongs to the DXR family.</text>
</comment>